<sequence>MMATLTTAISPQGPYVGRFAPSPSGALHFGSLVAALGSYLRARSLGGKWLIRIEDIDPPREVKGAADDILRTLEAYGFEWDDTVLYQSARTDAYQAKLDQLLAQDDAYFCQCSRKQIQAMGGIYDGRCHQLATPHQSGAIRLVNRAQVAEFTDNLMGKVVVDHDFATEDFIIKRSDGLYAYQLAVVLDDAHQGISEVVRGCDLIEASCRQLSLYQSLGLTAPQWLHLPLACLTPGFKLSKQNHAQAIDKQHPQASLNAALTFLGQSTVEPTSAAQMLAQAVAQFELTAVPKQREIILTA</sequence>
<proteinExistence type="inferred from homology"/>
<accession>Q8EIG6</accession>
<evidence type="ECO:0000255" key="1">
    <source>
        <dbReference type="HAMAP-Rule" id="MF_01428"/>
    </source>
</evidence>
<protein>
    <recommendedName>
        <fullName evidence="1">Glutamyl-Q tRNA(Asp) synthetase</fullName>
        <shortName evidence="1">Glu-Q-RSs</shortName>
        <ecNumber evidence="1">6.1.1.-</ecNumber>
    </recommendedName>
</protein>
<keyword id="KW-0030">Aminoacyl-tRNA synthetase</keyword>
<keyword id="KW-0067">ATP-binding</keyword>
<keyword id="KW-0436">Ligase</keyword>
<keyword id="KW-0479">Metal-binding</keyword>
<keyword id="KW-0547">Nucleotide-binding</keyword>
<keyword id="KW-1185">Reference proteome</keyword>
<keyword id="KW-0862">Zinc</keyword>
<name>GLUQ_SHEON</name>
<comment type="function">
    <text evidence="1">Catalyzes the tRNA-independent activation of glutamate in presence of ATP and the subsequent transfer of glutamate onto a tRNA(Asp). Glutamate is transferred on the 2-amino-5-(4,5-dihydroxy-2-cyclopenten-1-yl) moiety of the queuosine in the wobble position of the QUC anticodon.</text>
</comment>
<comment type="cofactor">
    <cofactor evidence="1">
        <name>Zn(2+)</name>
        <dbReference type="ChEBI" id="CHEBI:29105"/>
    </cofactor>
    <text evidence="1">Binds 1 zinc ion per subunit.</text>
</comment>
<comment type="similarity">
    <text evidence="1">Belongs to the class-I aminoacyl-tRNA synthetase family. GluQ subfamily.</text>
</comment>
<reference key="1">
    <citation type="journal article" date="2002" name="Nat. Biotechnol.">
        <title>Genome sequence of the dissimilatory metal ion-reducing bacterium Shewanella oneidensis.</title>
        <authorList>
            <person name="Heidelberg J.F."/>
            <person name="Paulsen I.T."/>
            <person name="Nelson K.E."/>
            <person name="Gaidos E.J."/>
            <person name="Nelson W.C."/>
            <person name="Read T.D."/>
            <person name="Eisen J.A."/>
            <person name="Seshadri R."/>
            <person name="Ward N.L."/>
            <person name="Methe B.A."/>
            <person name="Clayton R.A."/>
            <person name="Meyer T."/>
            <person name="Tsapin A."/>
            <person name="Scott J."/>
            <person name="Beanan M.J."/>
            <person name="Brinkac L.M."/>
            <person name="Daugherty S.C."/>
            <person name="DeBoy R.T."/>
            <person name="Dodson R.J."/>
            <person name="Durkin A.S."/>
            <person name="Haft D.H."/>
            <person name="Kolonay J.F."/>
            <person name="Madupu R."/>
            <person name="Peterson J.D."/>
            <person name="Umayam L.A."/>
            <person name="White O."/>
            <person name="Wolf A.M."/>
            <person name="Vamathevan J.J."/>
            <person name="Weidman J.F."/>
            <person name="Impraim M."/>
            <person name="Lee K."/>
            <person name="Berry K.J."/>
            <person name="Lee C."/>
            <person name="Mueller J."/>
            <person name="Khouri H.M."/>
            <person name="Gill J."/>
            <person name="Utterback T.R."/>
            <person name="McDonald L.A."/>
            <person name="Feldblyum T.V."/>
            <person name="Smith H.O."/>
            <person name="Venter J.C."/>
            <person name="Nealson K.H."/>
            <person name="Fraser C.M."/>
        </authorList>
    </citation>
    <scope>NUCLEOTIDE SEQUENCE [LARGE SCALE GENOMIC DNA]</scope>
    <source>
        <strain>ATCC 700550 / JCM 31522 / CIP 106686 / LMG 19005 / NCIMB 14063 / MR-1</strain>
    </source>
</reference>
<organism>
    <name type="scientific">Shewanella oneidensis (strain ATCC 700550 / JCM 31522 / CIP 106686 / LMG 19005 / NCIMB 14063 / MR-1)</name>
    <dbReference type="NCBI Taxonomy" id="211586"/>
    <lineage>
        <taxon>Bacteria</taxon>
        <taxon>Pseudomonadati</taxon>
        <taxon>Pseudomonadota</taxon>
        <taxon>Gammaproteobacteria</taxon>
        <taxon>Alteromonadales</taxon>
        <taxon>Shewanellaceae</taxon>
        <taxon>Shewanella</taxon>
    </lineage>
</organism>
<dbReference type="EC" id="6.1.1.-" evidence="1"/>
<dbReference type="EMBL" id="AE014299">
    <property type="protein sequence ID" value="AAN53949.1"/>
    <property type="molecule type" value="Genomic_DNA"/>
</dbReference>
<dbReference type="RefSeq" id="NP_716504.1">
    <property type="nucleotide sequence ID" value="NC_004347.2"/>
</dbReference>
<dbReference type="SMR" id="Q8EIG6"/>
<dbReference type="STRING" id="211586.SO_0873"/>
<dbReference type="PaxDb" id="211586-SO_0873"/>
<dbReference type="KEGG" id="son:SO_0873"/>
<dbReference type="PATRIC" id="fig|211586.12.peg.837"/>
<dbReference type="eggNOG" id="COG0008">
    <property type="taxonomic scope" value="Bacteria"/>
</dbReference>
<dbReference type="HOGENOM" id="CLU_015768_0_1_6"/>
<dbReference type="OrthoDB" id="9807503at2"/>
<dbReference type="PhylomeDB" id="Q8EIG6"/>
<dbReference type="BioCyc" id="SONE211586:G1GMP-815-MONOMER"/>
<dbReference type="Proteomes" id="UP000008186">
    <property type="component" value="Chromosome"/>
</dbReference>
<dbReference type="GO" id="GO:0005829">
    <property type="term" value="C:cytosol"/>
    <property type="evidence" value="ECO:0000318"/>
    <property type="project" value="GO_Central"/>
</dbReference>
<dbReference type="GO" id="GO:0005524">
    <property type="term" value="F:ATP binding"/>
    <property type="evidence" value="ECO:0007669"/>
    <property type="project" value="UniProtKB-KW"/>
</dbReference>
<dbReference type="GO" id="GO:0004818">
    <property type="term" value="F:glutamate-tRNA ligase activity"/>
    <property type="evidence" value="ECO:0000318"/>
    <property type="project" value="GO_Central"/>
</dbReference>
<dbReference type="GO" id="GO:0008270">
    <property type="term" value="F:zinc ion binding"/>
    <property type="evidence" value="ECO:0007669"/>
    <property type="project" value="UniProtKB-UniRule"/>
</dbReference>
<dbReference type="GO" id="GO:0006424">
    <property type="term" value="P:glutamyl-tRNA aminoacylation"/>
    <property type="evidence" value="ECO:0000318"/>
    <property type="project" value="GO_Central"/>
</dbReference>
<dbReference type="GO" id="GO:0006400">
    <property type="term" value="P:tRNA modification"/>
    <property type="evidence" value="ECO:0007669"/>
    <property type="project" value="InterPro"/>
</dbReference>
<dbReference type="FunFam" id="3.40.50.620:FF:000093">
    <property type="entry name" value="Glutamyl-Q tRNA(Asp) synthetase"/>
    <property type="match status" value="1"/>
</dbReference>
<dbReference type="Gene3D" id="3.40.50.620">
    <property type="entry name" value="HUPs"/>
    <property type="match status" value="1"/>
</dbReference>
<dbReference type="HAMAP" id="MF_01428">
    <property type="entry name" value="Glu_Q_tRNA_synth"/>
    <property type="match status" value="1"/>
</dbReference>
<dbReference type="InterPro" id="IPR022380">
    <property type="entry name" value="Glu-Q_tRNA(Asp)_Synthase"/>
</dbReference>
<dbReference type="InterPro" id="IPR000924">
    <property type="entry name" value="Glu/Gln-tRNA-synth"/>
</dbReference>
<dbReference type="InterPro" id="IPR020058">
    <property type="entry name" value="Glu/Gln-tRNA-synth_Ib_cat-dom"/>
</dbReference>
<dbReference type="InterPro" id="IPR049940">
    <property type="entry name" value="GluQ/Sye"/>
</dbReference>
<dbReference type="InterPro" id="IPR014729">
    <property type="entry name" value="Rossmann-like_a/b/a_fold"/>
</dbReference>
<dbReference type="NCBIfam" id="NF004314">
    <property type="entry name" value="PRK05710.1-3"/>
    <property type="match status" value="1"/>
</dbReference>
<dbReference type="NCBIfam" id="TIGR03838">
    <property type="entry name" value="queuosine_YadB"/>
    <property type="match status" value="1"/>
</dbReference>
<dbReference type="PANTHER" id="PTHR43311">
    <property type="entry name" value="GLUTAMATE--TRNA LIGASE"/>
    <property type="match status" value="1"/>
</dbReference>
<dbReference type="PANTHER" id="PTHR43311:SF1">
    <property type="entry name" value="GLUTAMYL-Q TRNA(ASP) SYNTHETASE"/>
    <property type="match status" value="1"/>
</dbReference>
<dbReference type="Pfam" id="PF00749">
    <property type="entry name" value="tRNA-synt_1c"/>
    <property type="match status" value="1"/>
</dbReference>
<dbReference type="PRINTS" id="PR00987">
    <property type="entry name" value="TRNASYNTHGLU"/>
</dbReference>
<dbReference type="SUPFAM" id="SSF52374">
    <property type="entry name" value="Nucleotidylyl transferase"/>
    <property type="match status" value="1"/>
</dbReference>
<feature type="chain" id="PRO_0000208326" description="Glutamyl-Q tRNA(Asp) synthetase">
    <location>
        <begin position="1"/>
        <end position="299"/>
    </location>
</feature>
<feature type="short sequence motif" description="'HIGH' region">
    <location>
        <begin position="21"/>
        <end position="31"/>
    </location>
</feature>
<feature type="short sequence motif" description="'KMSKS' region">
    <location>
        <begin position="237"/>
        <end position="241"/>
    </location>
</feature>
<feature type="binding site" evidence="1">
    <location>
        <begin position="18"/>
        <end position="22"/>
    </location>
    <ligand>
        <name>L-glutamate</name>
        <dbReference type="ChEBI" id="CHEBI:29985"/>
    </ligand>
</feature>
<feature type="binding site" evidence="1">
    <location>
        <position position="54"/>
    </location>
    <ligand>
        <name>L-glutamate</name>
        <dbReference type="ChEBI" id="CHEBI:29985"/>
    </ligand>
</feature>
<feature type="binding site" evidence="1">
    <location>
        <position position="110"/>
    </location>
    <ligand>
        <name>Zn(2+)</name>
        <dbReference type="ChEBI" id="CHEBI:29105"/>
    </ligand>
</feature>
<feature type="binding site" evidence="1">
    <location>
        <position position="112"/>
    </location>
    <ligand>
        <name>Zn(2+)</name>
        <dbReference type="ChEBI" id="CHEBI:29105"/>
    </ligand>
</feature>
<feature type="binding site" evidence="1">
    <location>
        <position position="124"/>
    </location>
    <ligand>
        <name>Zn(2+)</name>
        <dbReference type="ChEBI" id="CHEBI:29105"/>
    </ligand>
</feature>
<feature type="binding site" evidence="1">
    <location>
        <position position="128"/>
    </location>
    <ligand>
        <name>Zn(2+)</name>
        <dbReference type="ChEBI" id="CHEBI:29105"/>
    </ligand>
</feature>
<feature type="binding site" evidence="1">
    <location>
        <position position="181"/>
    </location>
    <ligand>
        <name>L-glutamate</name>
        <dbReference type="ChEBI" id="CHEBI:29985"/>
    </ligand>
</feature>
<feature type="binding site" evidence="1">
    <location>
        <position position="199"/>
    </location>
    <ligand>
        <name>L-glutamate</name>
        <dbReference type="ChEBI" id="CHEBI:29985"/>
    </ligand>
</feature>
<feature type="binding site" evidence="1">
    <location>
        <position position="240"/>
    </location>
    <ligand>
        <name>ATP</name>
        <dbReference type="ChEBI" id="CHEBI:30616"/>
    </ligand>
</feature>
<gene>
    <name evidence="1" type="primary">gluQ</name>
    <name type="ordered locus">SO_0873</name>
</gene>